<protein>
    <recommendedName>
        <fullName evidence="1">Large ribosomal subunit protein bL28</fullName>
    </recommendedName>
    <alternativeName>
        <fullName evidence="3">50S ribosomal protein L28</fullName>
    </alternativeName>
</protein>
<proteinExistence type="inferred from homology"/>
<evidence type="ECO:0000255" key="1">
    <source>
        <dbReference type="HAMAP-Rule" id="MF_00373"/>
    </source>
</evidence>
<evidence type="ECO:0000256" key="2">
    <source>
        <dbReference type="SAM" id="MobiDB-lite"/>
    </source>
</evidence>
<evidence type="ECO:0000305" key="3"/>
<reference key="1">
    <citation type="submission" date="2007-10" db="EMBL/GenBank/DDBJ databases">
        <title>Complete sequence of Shewanella pealeana ATCC 700345.</title>
        <authorList>
            <consortium name="US DOE Joint Genome Institute"/>
            <person name="Copeland A."/>
            <person name="Lucas S."/>
            <person name="Lapidus A."/>
            <person name="Barry K."/>
            <person name="Glavina del Rio T."/>
            <person name="Dalin E."/>
            <person name="Tice H."/>
            <person name="Pitluck S."/>
            <person name="Chertkov O."/>
            <person name="Brettin T."/>
            <person name="Bruce D."/>
            <person name="Detter J.C."/>
            <person name="Han C."/>
            <person name="Schmutz J."/>
            <person name="Larimer F."/>
            <person name="Land M."/>
            <person name="Hauser L."/>
            <person name="Kyrpides N."/>
            <person name="Kim E."/>
            <person name="Zhao J.-S.Z."/>
            <person name="Manno D."/>
            <person name="Hawari J."/>
            <person name="Richardson P."/>
        </authorList>
    </citation>
    <scope>NUCLEOTIDE SEQUENCE [LARGE SCALE GENOMIC DNA]</scope>
    <source>
        <strain>ATCC 700345 / ANG-SQ1</strain>
    </source>
</reference>
<accession>A8H9A9</accession>
<name>RL28_SHEPA</name>
<sequence length="78" mass="9188">MSRVCQVTGKRPMVGNNRSHAKNSTRRRFLPNLQNHRFWLENEKRFVQLRISTKGMRIIDKKGIEVVIAELRARGEKV</sequence>
<dbReference type="EMBL" id="CP000851">
    <property type="protein sequence ID" value="ABV89146.1"/>
    <property type="molecule type" value="Genomic_DNA"/>
</dbReference>
<dbReference type="RefSeq" id="WP_012157028.1">
    <property type="nucleotide sequence ID" value="NC_009901.1"/>
</dbReference>
<dbReference type="SMR" id="A8H9A9"/>
<dbReference type="STRING" id="398579.Spea_3836"/>
<dbReference type="KEGG" id="spl:Spea_3836"/>
<dbReference type="eggNOG" id="COG0227">
    <property type="taxonomic scope" value="Bacteria"/>
</dbReference>
<dbReference type="HOGENOM" id="CLU_064548_3_1_6"/>
<dbReference type="OrthoDB" id="9805609at2"/>
<dbReference type="Proteomes" id="UP000002608">
    <property type="component" value="Chromosome"/>
</dbReference>
<dbReference type="GO" id="GO:0022625">
    <property type="term" value="C:cytosolic large ribosomal subunit"/>
    <property type="evidence" value="ECO:0007669"/>
    <property type="project" value="TreeGrafter"/>
</dbReference>
<dbReference type="GO" id="GO:0003735">
    <property type="term" value="F:structural constituent of ribosome"/>
    <property type="evidence" value="ECO:0007669"/>
    <property type="project" value="InterPro"/>
</dbReference>
<dbReference type="GO" id="GO:0006412">
    <property type="term" value="P:translation"/>
    <property type="evidence" value="ECO:0007669"/>
    <property type="project" value="UniProtKB-UniRule"/>
</dbReference>
<dbReference type="FunFam" id="2.30.170.40:FF:000001">
    <property type="entry name" value="50S ribosomal protein L28"/>
    <property type="match status" value="1"/>
</dbReference>
<dbReference type="Gene3D" id="2.30.170.40">
    <property type="entry name" value="Ribosomal protein L28/L24"/>
    <property type="match status" value="1"/>
</dbReference>
<dbReference type="HAMAP" id="MF_00373">
    <property type="entry name" value="Ribosomal_bL28"/>
    <property type="match status" value="1"/>
</dbReference>
<dbReference type="InterPro" id="IPR026569">
    <property type="entry name" value="Ribosomal_bL28"/>
</dbReference>
<dbReference type="InterPro" id="IPR034704">
    <property type="entry name" value="Ribosomal_bL28/bL31-like_sf"/>
</dbReference>
<dbReference type="InterPro" id="IPR001383">
    <property type="entry name" value="Ribosomal_bL28_bact-type"/>
</dbReference>
<dbReference type="InterPro" id="IPR037147">
    <property type="entry name" value="Ribosomal_bL28_sf"/>
</dbReference>
<dbReference type="NCBIfam" id="TIGR00009">
    <property type="entry name" value="L28"/>
    <property type="match status" value="1"/>
</dbReference>
<dbReference type="PANTHER" id="PTHR13528">
    <property type="entry name" value="39S RIBOSOMAL PROTEIN L28, MITOCHONDRIAL"/>
    <property type="match status" value="1"/>
</dbReference>
<dbReference type="PANTHER" id="PTHR13528:SF2">
    <property type="entry name" value="LARGE RIBOSOMAL SUBUNIT PROTEIN BL28M"/>
    <property type="match status" value="1"/>
</dbReference>
<dbReference type="Pfam" id="PF00830">
    <property type="entry name" value="Ribosomal_L28"/>
    <property type="match status" value="1"/>
</dbReference>
<dbReference type="SUPFAM" id="SSF143800">
    <property type="entry name" value="L28p-like"/>
    <property type="match status" value="1"/>
</dbReference>
<keyword id="KW-1185">Reference proteome</keyword>
<keyword id="KW-0687">Ribonucleoprotein</keyword>
<keyword id="KW-0689">Ribosomal protein</keyword>
<organism>
    <name type="scientific">Shewanella pealeana (strain ATCC 700345 / ANG-SQ1)</name>
    <dbReference type="NCBI Taxonomy" id="398579"/>
    <lineage>
        <taxon>Bacteria</taxon>
        <taxon>Pseudomonadati</taxon>
        <taxon>Pseudomonadota</taxon>
        <taxon>Gammaproteobacteria</taxon>
        <taxon>Alteromonadales</taxon>
        <taxon>Shewanellaceae</taxon>
        <taxon>Shewanella</taxon>
    </lineage>
</organism>
<feature type="chain" id="PRO_1000079864" description="Large ribosomal subunit protein bL28">
    <location>
        <begin position="1"/>
        <end position="78"/>
    </location>
</feature>
<feature type="region of interest" description="Disordered" evidence="2">
    <location>
        <begin position="1"/>
        <end position="23"/>
    </location>
</feature>
<comment type="similarity">
    <text evidence="1">Belongs to the bacterial ribosomal protein bL28 family.</text>
</comment>
<gene>
    <name evidence="1" type="primary">rpmB</name>
    <name type="ordered locus">Spea_3836</name>
</gene>